<gene>
    <name evidence="1" type="primary">dxs</name>
    <name type="ordered locus">Bcer98_2870</name>
</gene>
<reference key="1">
    <citation type="journal article" date="2008" name="Chem. Biol. Interact.">
        <title>Extending the Bacillus cereus group genomics to putative food-borne pathogens of different toxicity.</title>
        <authorList>
            <person name="Lapidus A."/>
            <person name="Goltsman E."/>
            <person name="Auger S."/>
            <person name="Galleron N."/>
            <person name="Segurens B."/>
            <person name="Dossat C."/>
            <person name="Land M.L."/>
            <person name="Broussolle V."/>
            <person name="Brillard J."/>
            <person name="Guinebretiere M.-H."/>
            <person name="Sanchis V."/>
            <person name="Nguen-the C."/>
            <person name="Lereclus D."/>
            <person name="Richardson P."/>
            <person name="Wincker P."/>
            <person name="Weissenbach J."/>
            <person name="Ehrlich S.D."/>
            <person name="Sorokin A."/>
        </authorList>
    </citation>
    <scope>NUCLEOTIDE SEQUENCE [LARGE SCALE GENOMIC DNA]</scope>
    <source>
        <strain>DSM 22905 / CIP 110041 / 391-98 / NVH 391-98</strain>
    </source>
</reference>
<proteinExistence type="inferred from homology"/>
<evidence type="ECO:0000255" key="1">
    <source>
        <dbReference type="HAMAP-Rule" id="MF_00315"/>
    </source>
</evidence>
<accession>A7GSJ5</accession>
<keyword id="KW-0414">Isoprene biosynthesis</keyword>
<keyword id="KW-0460">Magnesium</keyword>
<keyword id="KW-0479">Metal-binding</keyword>
<keyword id="KW-0784">Thiamine biosynthesis</keyword>
<keyword id="KW-0786">Thiamine pyrophosphate</keyword>
<keyword id="KW-0808">Transferase</keyword>
<name>DXS_BACCN</name>
<organism>
    <name type="scientific">Bacillus cytotoxicus (strain DSM 22905 / CIP 110041 / 391-98 / NVH 391-98)</name>
    <dbReference type="NCBI Taxonomy" id="315749"/>
    <lineage>
        <taxon>Bacteria</taxon>
        <taxon>Bacillati</taxon>
        <taxon>Bacillota</taxon>
        <taxon>Bacilli</taxon>
        <taxon>Bacillales</taxon>
        <taxon>Bacillaceae</taxon>
        <taxon>Bacillus</taxon>
        <taxon>Bacillus cereus group</taxon>
    </lineage>
</organism>
<protein>
    <recommendedName>
        <fullName evidence="1">1-deoxy-D-xylulose-5-phosphate synthase</fullName>
        <ecNumber evidence="1">2.2.1.7</ecNumber>
    </recommendedName>
    <alternativeName>
        <fullName evidence="1">1-deoxyxylulose-5-phosphate synthase</fullName>
        <shortName evidence="1">DXP synthase</shortName>
        <shortName evidence="1">DXPS</shortName>
    </alternativeName>
</protein>
<sequence length="630" mass="69600">MDLTQIQNPSFLKDMSISELEELSEDIRKFLIEELSQTGGHIAPNLGVVELTIALHTLFDSPKDKFLWDVGHQSYVHKILTGRAKEFRTLRQYKGLCGFPKRCESEHDVWETGHSSTSLSAAMGMALARDLKKTDEYVIPIIGDGALTGGMALEALNHIGHEKTDMIVILNDNEMSIAPNVGALHNVLGRLRTAGKYQWVKDELEYILKKIPAVGGKVAATAEKIKDSLKYLLVSGVFFEELGFTYLGPVDGHDYEKLFETLQYAKKTKGPVLVHVITKKGKGYKPAESDVIGTWHGTGPYKIESGDFVKPKEVAPAWSAVVSETVRKLARVDERIVAITPAMPVGSKLEKFHQEFPNRMIDVGIAEQHATTMAAGMATQGMKPFLAIYSTFLQRAYDQVVHDICRQNLNVFIGIDRSGLVGADGETHQGVFDIAFLRHLPNIVLMMPKDENEGQHLVYTAMQYEDGPIALRYPRGNGLGVPMDDEFKVIPIGTWETLREGTQAAIVTFGTTIPMAMEAAERLGKAGVSVKVVNARFIKPMDEAYLHDLLGKNIPILTIEEACLIGGFGSGVMEFAAEHGYHSALIERMGIPDYFIEHGSVTKLLEEIGLTTDAVVDRIHTMIPSKQKRA</sequence>
<dbReference type="EC" id="2.2.1.7" evidence="1"/>
<dbReference type="EMBL" id="CP000764">
    <property type="protein sequence ID" value="ABS23103.1"/>
    <property type="molecule type" value="Genomic_DNA"/>
</dbReference>
<dbReference type="RefSeq" id="WP_012095330.1">
    <property type="nucleotide sequence ID" value="NC_009674.1"/>
</dbReference>
<dbReference type="SMR" id="A7GSJ5"/>
<dbReference type="STRING" id="315749.Bcer98_2870"/>
<dbReference type="GeneID" id="33898123"/>
<dbReference type="KEGG" id="bcy:Bcer98_2870"/>
<dbReference type="eggNOG" id="COG1154">
    <property type="taxonomic scope" value="Bacteria"/>
</dbReference>
<dbReference type="HOGENOM" id="CLU_009227_1_4_9"/>
<dbReference type="OrthoDB" id="9803371at2"/>
<dbReference type="UniPathway" id="UPA00064">
    <property type="reaction ID" value="UER00091"/>
</dbReference>
<dbReference type="Proteomes" id="UP000002300">
    <property type="component" value="Chromosome"/>
</dbReference>
<dbReference type="GO" id="GO:0005829">
    <property type="term" value="C:cytosol"/>
    <property type="evidence" value="ECO:0007669"/>
    <property type="project" value="TreeGrafter"/>
</dbReference>
<dbReference type="GO" id="GO:0008661">
    <property type="term" value="F:1-deoxy-D-xylulose-5-phosphate synthase activity"/>
    <property type="evidence" value="ECO:0007669"/>
    <property type="project" value="UniProtKB-UniRule"/>
</dbReference>
<dbReference type="GO" id="GO:0000287">
    <property type="term" value="F:magnesium ion binding"/>
    <property type="evidence" value="ECO:0007669"/>
    <property type="project" value="UniProtKB-UniRule"/>
</dbReference>
<dbReference type="GO" id="GO:0030976">
    <property type="term" value="F:thiamine pyrophosphate binding"/>
    <property type="evidence" value="ECO:0007669"/>
    <property type="project" value="UniProtKB-UniRule"/>
</dbReference>
<dbReference type="GO" id="GO:0052865">
    <property type="term" value="P:1-deoxy-D-xylulose 5-phosphate biosynthetic process"/>
    <property type="evidence" value="ECO:0007669"/>
    <property type="project" value="UniProtKB-UniPathway"/>
</dbReference>
<dbReference type="GO" id="GO:0019288">
    <property type="term" value="P:isopentenyl diphosphate biosynthetic process, methylerythritol 4-phosphate pathway"/>
    <property type="evidence" value="ECO:0007669"/>
    <property type="project" value="TreeGrafter"/>
</dbReference>
<dbReference type="GO" id="GO:0016114">
    <property type="term" value="P:terpenoid biosynthetic process"/>
    <property type="evidence" value="ECO:0007669"/>
    <property type="project" value="UniProtKB-UniRule"/>
</dbReference>
<dbReference type="GO" id="GO:0009228">
    <property type="term" value="P:thiamine biosynthetic process"/>
    <property type="evidence" value="ECO:0007669"/>
    <property type="project" value="UniProtKB-UniRule"/>
</dbReference>
<dbReference type="CDD" id="cd02007">
    <property type="entry name" value="TPP_DXS"/>
    <property type="match status" value="1"/>
</dbReference>
<dbReference type="CDD" id="cd07033">
    <property type="entry name" value="TPP_PYR_DXS_TK_like"/>
    <property type="match status" value="1"/>
</dbReference>
<dbReference type="FunFam" id="3.40.50.920:FF:000002">
    <property type="entry name" value="1-deoxy-D-xylulose-5-phosphate synthase"/>
    <property type="match status" value="1"/>
</dbReference>
<dbReference type="FunFam" id="3.40.50.970:FF:000030">
    <property type="entry name" value="1-deoxy-D-xylulose-5-phosphate synthase"/>
    <property type="match status" value="1"/>
</dbReference>
<dbReference type="Gene3D" id="3.40.50.920">
    <property type="match status" value="1"/>
</dbReference>
<dbReference type="Gene3D" id="3.40.50.970">
    <property type="match status" value="2"/>
</dbReference>
<dbReference type="HAMAP" id="MF_00315">
    <property type="entry name" value="DXP_synth"/>
    <property type="match status" value="1"/>
</dbReference>
<dbReference type="InterPro" id="IPR005477">
    <property type="entry name" value="Dxylulose-5-P_synthase"/>
</dbReference>
<dbReference type="InterPro" id="IPR029061">
    <property type="entry name" value="THDP-binding"/>
</dbReference>
<dbReference type="InterPro" id="IPR009014">
    <property type="entry name" value="Transketo_C/PFOR_II"/>
</dbReference>
<dbReference type="InterPro" id="IPR005475">
    <property type="entry name" value="Transketolase-like_Pyr-bd"/>
</dbReference>
<dbReference type="InterPro" id="IPR020826">
    <property type="entry name" value="Transketolase_BS"/>
</dbReference>
<dbReference type="InterPro" id="IPR033248">
    <property type="entry name" value="Transketolase_C"/>
</dbReference>
<dbReference type="InterPro" id="IPR049557">
    <property type="entry name" value="Transketolase_CS"/>
</dbReference>
<dbReference type="NCBIfam" id="TIGR00204">
    <property type="entry name" value="dxs"/>
    <property type="match status" value="1"/>
</dbReference>
<dbReference type="NCBIfam" id="NF003933">
    <property type="entry name" value="PRK05444.2-2"/>
    <property type="match status" value="1"/>
</dbReference>
<dbReference type="PANTHER" id="PTHR43322">
    <property type="entry name" value="1-D-DEOXYXYLULOSE 5-PHOSPHATE SYNTHASE-RELATED"/>
    <property type="match status" value="1"/>
</dbReference>
<dbReference type="PANTHER" id="PTHR43322:SF5">
    <property type="entry name" value="1-DEOXY-D-XYLULOSE-5-PHOSPHATE SYNTHASE, CHLOROPLASTIC"/>
    <property type="match status" value="1"/>
</dbReference>
<dbReference type="Pfam" id="PF13292">
    <property type="entry name" value="DXP_synthase_N"/>
    <property type="match status" value="1"/>
</dbReference>
<dbReference type="Pfam" id="PF02779">
    <property type="entry name" value="Transket_pyr"/>
    <property type="match status" value="1"/>
</dbReference>
<dbReference type="Pfam" id="PF02780">
    <property type="entry name" value="Transketolase_C"/>
    <property type="match status" value="1"/>
</dbReference>
<dbReference type="SMART" id="SM00861">
    <property type="entry name" value="Transket_pyr"/>
    <property type="match status" value="1"/>
</dbReference>
<dbReference type="SUPFAM" id="SSF52518">
    <property type="entry name" value="Thiamin diphosphate-binding fold (THDP-binding)"/>
    <property type="match status" value="2"/>
</dbReference>
<dbReference type="SUPFAM" id="SSF52922">
    <property type="entry name" value="TK C-terminal domain-like"/>
    <property type="match status" value="1"/>
</dbReference>
<dbReference type="PROSITE" id="PS00801">
    <property type="entry name" value="TRANSKETOLASE_1"/>
    <property type="match status" value="1"/>
</dbReference>
<dbReference type="PROSITE" id="PS00802">
    <property type="entry name" value="TRANSKETOLASE_2"/>
    <property type="match status" value="1"/>
</dbReference>
<feature type="chain" id="PRO_1000079081" description="1-deoxy-D-xylulose-5-phosphate synthase">
    <location>
        <begin position="1"/>
        <end position="630"/>
    </location>
</feature>
<feature type="binding site" evidence="1">
    <location>
        <position position="72"/>
    </location>
    <ligand>
        <name>thiamine diphosphate</name>
        <dbReference type="ChEBI" id="CHEBI:58937"/>
    </ligand>
</feature>
<feature type="binding site" evidence="1">
    <location>
        <begin position="113"/>
        <end position="115"/>
    </location>
    <ligand>
        <name>thiamine diphosphate</name>
        <dbReference type="ChEBI" id="CHEBI:58937"/>
    </ligand>
</feature>
<feature type="binding site" evidence="1">
    <location>
        <position position="144"/>
    </location>
    <ligand>
        <name>Mg(2+)</name>
        <dbReference type="ChEBI" id="CHEBI:18420"/>
    </ligand>
</feature>
<feature type="binding site" evidence="1">
    <location>
        <begin position="145"/>
        <end position="146"/>
    </location>
    <ligand>
        <name>thiamine diphosphate</name>
        <dbReference type="ChEBI" id="CHEBI:58937"/>
    </ligand>
</feature>
<feature type="binding site" evidence="1">
    <location>
        <position position="173"/>
    </location>
    <ligand>
        <name>Mg(2+)</name>
        <dbReference type="ChEBI" id="CHEBI:18420"/>
    </ligand>
</feature>
<feature type="binding site" evidence="1">
    <location>
        <position position="173"/>
    </location>
    <ligand>
        <name>thiamine diphosphate</name>
        <dbReference type="ChEBI" id="CHEBI:58937"/>
    </ligand>
</feature>
<feature type="binding site" evidence="1">
    <location>
        <position position="284"/>
    </location>
    <ligand>
        <name>thiamine diphosphate</name>
        <dbReference type="ChEBI" id="CHEBI:58937"/>
    </ligand>
</feature>
<feature type="binding site" evidence="1">
    <location>
        <position position="367"/>
    </location>
    <ligand>
        <name>thiamine diphosphate</name>
        <dbReference type="ChEBI" id="CHEBI:58937"/>
    </ligand>
</feature>
<comment type="function">
    <text evidence="1">Catalyzes the acyloin condensation reaction between C atoms 2 and 3 of pyruvate and glyceraldehyde 3-phosphate to yield 1-deoxy-D-xylulose-5-phosphate (DXP).</text>
</comment>
<comment type="catalytic activity">
    <reaction evidence="1">
        <text>D-glyceraldehyde 3-phosphate + pyruvate + H(+) = 1-deoxy-D-xylulose 5-phosphate + CO2</text>
        <dbReference type="Rhea" id="RHEA:12605"/>
        <dbReference type="ChEBI" id="CHEBI:15361"/>
        <dbReference type="ChEBI" id="CHEBI:15378"/>
        <dbReference type="ChEBI" id="CHEBI:16526"/>
        <dbReference type="ChEBI" id="CHEBI:57792"/>
        <dbReference type="ChEBI" id="CHEBI:59776"/>
        <dbReference type="EC" id="2.2.1.7"/>
    </reaction>
</comment>
<comment type="cofactor">
    <cofactor evidence="1">
        <name>Mg(2+)</name>
        <dbReference type="ChEBI" id="CHEBI:18420"/>
    </cofactor>
    <text evidence="1">Binds 1 Mg(2+) ion per subunit.</text>
</comment>
<comment type="cofactor">
    <cofactor evidence="1">
        <name>thiamine diphosphate</name>
        <dbReference type="ChEBI" id="CHEBI:58937"/>
    </cofactor>
    <text evidence="1">Binds 1 thiamine pyrophosphate per subunit.</text>
</comment>
<comment type="pathway">
    <text evidence="1">Metabolic intermediate biosynthesis; 1-deoxy-D-xylulose 5-phosphate biosynthesis; 1-deoxy-D-xylulose 5-phosphate from D-glyceraldehyde 3-phosphate and pyruvate: step 1/1.</text>
</comment>
<comment type="subunit">
    <text evidence="1">Homodimer.</text>
</comment>
<comment type="similarity">
    <text evidence="1">Belongs to the transketolase family. DXPS subfamily.</text>
</comment>